<feature type="chain" id="PRO_0000425387" description="xyloglucan O-acetyltransferase 2">
    <location>
        <begin position="1"/>
        <end position="414"/>
    </location>
</feature>
<feature type="topological domain" description="Cytoplasmic" evidence="8">
    <location>
        <begin position="1"/>
        <end position="26"/>
    </location>
</feature>
<feature type="transmembrane region" description="Helical; Signal-anchor for type II membrane protein" evidence="2">
    <location>
        <begin position="27"/>
        <end position="47"/>
    </location>
</feature>
<feature type="topological domain" description="Lumenal" evidence="8">
    <location>
        <begin position="48"/>
        <end position="414"/>
    </location>
</feature>
<feature type="short sequence motif" description="GDS motif" evidence="10">
    <location>
        <begin position="143"/>
        <end position="145"/>
    </location>
</feature>
<feature type="short sequence motif" description="DXXH motif" evidence="10">
    <location>
        <begin position="389"/>
        <end position="392"/>
    </location>
</feature>
<feature type="active site" description="Nucleophile" evidence="1">
    <location>
        <position position="145"/>
    </location>
</feature>
<feature type="active site" description="Proton donor" evidence="1">
    <location>
        <position position="389"/>
    </location>
</feature>
<feature type="active site" description="Proton acceptor" evidence="1">
    <location>
        <position position="392"/>
    </location>
</feature>
<feature type="glycosylation site" description="N-linked (GlcNAc...) asparagine" evidence="3">
    <location>
        <position position="88"/>
    </location>
</feature>
<feature type="glycosylation site" description="N-linked (GlcNAc...) asparagine" evidence="3">
    <location>
        <position position="205"/>
    </location>
</feature>
<feature type="glycosylation site" description="N-linked (GlcNAc...) asparagine" evidence="3">
    <location>
        <position position="263"/>
    </location>
</feature>
<feature type="glycosylation site" description="N-linked (GlcNAc...) asparagine" evidence="3">
    <location>
        <position position="308"/>
    </location>
</feature>
<feature type="disulfide bond" evidence="1">
    <location>
        <begin position="70"/>
        <end position="120"/>
    </location>
</feature>
<feature type="disulfide bond" evidence="1">
    <location>
        <begin position="91"/>
        <end position="156"/>
    </location>
</feature>
<feature type="disulfide bond" evidence="1">
    <location>
        <begin position="100"/>
        <end position="394"/>
    </location>
</feature>
<feature type="disulfide bond" evidence="1">
    <location>
        <begin position="317"/>
        <end position="390"/>
    </location>
</feature>
<evidence type="ECO:0000250" key="1">
    <source>
        <dbReference type="UniProtKB" id="Q9LY46"/>
    </source>
</evidence>
<evidence type="ECO:0000255" key="2"/>
<evidence type="ECO:0000255" key="3">
    <source>
        <dbReference type="PROSITE-ProRule" id="PRU00498"/>
    </source>
</evidence>
<evidence type="ECO:0000269" key="4">
    <source>
    </source>
</evidence>
<evidence type="ECO:0000269" key="5">
    <source>
    </source>
</evidence>
<evidence type="ECO:0000303" key="6">
    <source>
    </source>
</evidence>
<evidence type="ECO:0000303" key="7">
    <source>
    </source>
</evidence>
<evidence type="ECO:0000305" key="8"/>
<evidence type="ECO:0000305" key="9">
    <source>
    </source>
</evidence>
<evidence type="ECO:0000305" key="10">
    <source>
    </source>
</evidence>
<evidence type="ECO:0000312" key="11">
    <source>
        <dbReference type="Araport" id="AT3G28150"/>
    </source>
</evidence>
<evidence type="ECO:0000312" key="12">
    <source>
        <dbReference type="EMBL" id="BAB01135.1"/>
    </source>
</evidence>
<proteinExistence type="evidence at protein level"/>
<accession>Q9LRS2</accession>
<organism>
    <name type="scientific">Arabidopsis thaliana</name>
    <name type="common">Mouse-ear cress</name>
    <dbReference type="NCBI Taxonomy" id="3702"/>
    <lineage>
        <taxon>Eukaryota</taxon>
        <taxon>Viridiplantae</taxon>
        <taxon>Streptophyta</taxon>
        <taxon>Embryophyta</taxon>
        <taxon>Tracheophyta</taxon>
        <taxon>Spermatophyta</taxon>
        <taxon>Magnoliopsida</taxon>
        <taxon>eudicotyledons</taxon>
        <taxon>Gunneridae</taxon>
        <taxon>Pentapetalae</taxon>
        <taxon>rosids</taxon>
        <taxon>malvids</taxon>
        <taxon>Brassicales</taxon>
        <taxon>Brassicaceae</taxon>
        <taxon>Camelineae</taxon>
        <taxon>Arabidopsis</taxon>
    </lineage>
</organism>
<sequence length="414" mass="47973">MKSSSSIFRETSEKKSERWMMMNIGRFSPFFLSSFCITLFFTGFFVYQNPFKSIADQNVLSFQPQIDPECDLFKGHWVPDKRGSLYTNSSCATIPDSKNCIKQGRPDKDFLFWRWKPDGCDLPRFNPKAFLSMVRGKKMNFIGDSVARNHMESLLCLLSMEETPKDIYKDGEDRNRIWYFPKHDFTLSTSWTKFLVEERERRDSNNTGTGLFDLDIGKIDEGWFNGLPNTDIAIVSAAHWFFRPIFIHRGDETLGCIYCNLPNMTQISPEEGFKLVYSAVLRQINECEMCKKDLVTVLRTISPAHFENGTWDTGGTCSRTSPFGENKIDLQSNEMKIRKSQIEQLEGITKRGNKAKKFAVLDVTRVMQMRPDGHPNGYWGNKWMKGYNDCVHWCLPGPIDAWNDFLMAIIRQLR</sequence>
<comment type="function">
    <text evidence="4 5">Xyloglucan acetyltransferase that catalyzes the acetylation of fucosylated Gal residues on xyloglucan side chains (PubMed:30083810). Predominantly catalyze 6-O-monoacetylation of Gal residues in the Fuc-Gal-Xyl trisaccharide side chains of xyloglucan oligomers (PubMed:30083810). Involved in xyloglucan specific O-acetylation in seeds (PubMed:22086088).</text>
</comment>
<comment type="biophysicochemical properties">
    <kinetics>
        <KM evidence="5">4.2 mM for xyloglucan oligomer</KM>
        <Vmax evidence="5">55.2 pmol/min/mg enzyme with xyloglucan oligomer as substrate</Vmax>
    </kinetics>
</comment>
<comment type="subcellular location">
    <subcellularLocation>
        <location evidence="8">Membrane</location>
        <topology evidence="8">Single-pass type II membrane protein</topology>
    </subcellularLocation>
</comment>
<comment type="disruption phenotype">
    <text evidence="4">No visible phenotype. Loss of O-acetylated xyloglucan oligosaccharides in seeds, but no effect on xyloglucan O-acetylation in roots and rosette leaves.</text>
</comment>
<comment type="miscellaneous">
    <text evidence="9">Contains 2 motifs that are conserved in esterases, but it is unlikely that this protein belongs to the catalytically active pectin esterases.</text>
</comment>
<comment type="similarity">
    <text evidence="8">Belongs to the PC-esterase family. TBL subfamily.</text>
</comment>
<protein>
    <recommendedName>
        <fullName evidence="7">xyloglucan O-acetyltransferase 2</fullName>
        <ecNumber evidence="5">2.3.1.-</ecNumber>
    </recommendedName>
    <alternativeName>
        <fullName evidence="6">Protein ALTERED XYLOGLUCAN 4-like</fullName>
    </alternativeName>
    <alternativeName>
        <fullName evidence="6">Protein trichome birefringence-like 22</fullName>
    </alternativeName>
</protein>
<name>TBL22_ARATH</name>
<gene>
    <name evidence="6" type="primary">AXY4L</name>
    <name evidence="6" type="synonym">TBL22</name>
    <name evidence="7" type="synonym">XGOAT2</name>
    <name evidence="11" type="ordered locus">At3g28150</name>
    <name evidence="12" type="ORF">MMG15.18</name>
</gene>
<keyword id="KW-1015">Disulfide bond</keyword>
<keyword id="KW-0325">Glycoprotein</keyword>
<keyword id="KW-0472">Membrane</keyword>
<keyword id="KW-1185">Reference proteome</keyword>
<keyword id="KW-0735">Signal-anchor</keyword>
<keyword id="KW-0808">Transferase</keyword>
<keyword id="KW-0812">Transmembrane</keyword>
<keyword id="KW-1133">Transmembrane helix</keyword>
<reference key="1">
    <citation type="journal article" date="2000" name="DNA Res.">
        <title>Structural analysis of Arabidopsis thaliana chromosome 3. II. Sequence features of the 4,251,695 bp regions covered by 90 P1, TAC and BAC clones.</title>
        <authorList>
            <person name="Kaneko T."/>
            <person name="Katoh T."/>
            <person name="Sato S."/>
            <person name="Nakamura Y."/>
            <person name="Asamizu E."/>
            <person name="Tabata S."/>
        </authorList>
    </citation>
    <scope>NUCLEOTIDE SEQUENCE [LARGE SCALE GENOMIC DNA]</scope>
    <source>
        <strain>cv. Columbia</strain>
    </source>
</reference>
<reference key="2">
    <citation type="journal article" date="2017" name="Plant J.">
        <title>Araport11: a complete reannotation of the Arabidopsis thaliana reference genome.</title>
        <authorList>
            <person name="Cheng C.Y."/>
            <person name="Krishnakumar V."/>
            <person name="Chan A.P."/>
            <person name="Thibaud-Nissen F."/>
            <person name="Schobel S."/>
            <person name="Town C.D."/>
        </authorList>
    </citation>
    <scope>GENOME REANNOTATION</scope>
    <source>
        <strain>cv. Columbia</strain>
    </source>
</reference>
<reference key="3">
    <citation type="journal article" date="2003" name="Science">
        <title>Empirical analysis of transcriptional activity in the Arabidopsis genome.</title>
        <authorList>
            <person name="Yamada K."/>
            <person name="Lim J."/>
            <person name="Dale J.M."/>
            <person name="Chen H."/>
            <person name="Shinn P."/>
            <person name="Palm C.J."/>
            <person name="Southwick A.M."/>
            <person name="Wu H.C."/>
            <person name="Kim C.J."/>
            <person name="Nguyen M."/>
            <person name="Pham P.K."/>
            <person name="Cheuk R.F."/>
            <person name="Karlin-Newmann G."/>
            <person name="Liu S.X."/>
            <person name="Lam B."/>
            <person name="Sakano H."/>
            <person name="Wu T."/>
            <person name="Yu G."/>
            <person name="Miranda M."/>
            <person name="Quach H.L."/>
            <person name="Tripp M."/>
            <person name="Chang C.H."/>
            <person name="Lee J.M."/>
            <person name="Toriumi M.J."/>
            <person name="Chan M.M."/>
            <person name="Tang C.C."/>
            <person name="Onodera C.S."/>
            <person name="Deng J.M."/>
            <person name="Akiyama K."/>
            <person name="Ansari Y."/>
            <person name="Arakawa T."/>
            <person name="Banh J."/>
            <person name="Banno F."/>
            <person name="Bowser L."/>
            <person name="Brooks S.Y."/>
            <person name="Carninci P."/>
            <person name="Chao Q."/>
            <person name="Choy N."/>
            <person name="Enju A."/>
            <person name="Goldsmith A.D."/>
            <person name="Gurjal M."/>
            <person name="Hansen N.F."/>
            <person name="Hayashizaki Y."/>
            <person name="Johnson-Hopson C."/>
            <person name="Hsuan V.W."/>
            <person name="Iida K."/>
            <person name="Karnes M."/>
            <person name="Khan S."/>
            <person name="Koesema E."/>
            <person name="Ishida J."/>
            <person name="Jiang P.X."/>
            <person name="Jones T."/>
            <person name="Kawai J."/>
            <person name="Kamiya A."/>
            <person name="Meyers C."/>
            <person name="Nakajima M."/>
            <person name="Narusaka M."/>
            <person name="Seki M."/>
            <person name="Sakurai T."/>
            <person name="Satou M."/>
            <person name="Tamse R."/>
            <person name="Vaysberg M."/>
            <person name="Wallender E.K."/>
            <person name="Wong C."/>
            <person name="Yamamura Y."/>
            <person name="Yuan S."/>
            <person name="Shinozaki K."/>
            <person name="Davis R.W."/>
            <person name="Theologis A."/>
            <person name="Ecker J.R."/>
        </authorList>
    </citation>
    <scope>NUCLEOTIDE SEQUENCE [LARGE SCALE MRNA]</scope>
    <source>
        <strain>cv. Columbia</strain>
    </source>
</reference>
<reference key="4">
    <citation type="journal article" date="2007" name="Plant J.">
        <title>Arabidopsis ESK1 encodes a novel regulator of freezing tolerance.</title>
        <authorList>
            <person name="Xin Z."/>
            <person name="Mandaokar A."/>
            <person name="Chen J."/>
            <person name="Last R.L."/>
            <person name="Browse J."/>
        </authorList>
    </citation>
    <scope>GENE FAMILY</scope>
    <source>
        <strain>cv. Columbia</strain>
    </source>
</reference>
<reference key="5">
    <citation type="journal article" date="2010" name="Plant Physiol.">
        <title>TRICHOME BIREFRINGENCE and its homolog AT5G01360 encode plant-specific DUF231 proteins required for cellulose biosynthesis in Arabidopsis.</title>
        <authorList>
            <person name="Bischoff V."/>
            <person name="Nita S."/>
            <person name="Neumetzler L."/>
            <person name="Schindelasch D."/>
            <person name="Urbain A."/>
            <person name="Eshed R."/>
            <person name="Persson S."/>
            <person name="Delmer D."/>
            <person name="Scheible W.R."/>
        </authorList>
    </citation>
    <scope>GENE FAMILY</scope>
    <scope>NOMENCLATURE</scope>
</reference>
<reference key="6">
    <citation type="journal article" date="2011" name="Plant Cell">
        <title>O-acetylation of Arabidopsis hemicellulose xyloglucan requires AXY4 or AXY4L, proteins with a TBL and DUF231 domain.</title>
        <authorList>
            <person name="Gille S."/>
            <person name="de Souza A."/>
            <person name="Xiong G."/>
            <person name="Benz M."/>
            <person name="Cheng K."/>
            <person name="Schultink A."/>
            <person name="Reca I.B."/>
            <person name="Pauly M."/>
        </authorList>
    </citation>
    <scope>FUNCTION</scope>
    <scope>DISRUPTION PHENOTYPE</scope>
</reference>
<reference key="7">
    <citation type="journal article" date="2018" name="Planta">
        <title>Xyloglucan O-acetyltransferases from Arabidopsis thaliana and Populus trichocarpa catalyze acetylation of fucosylated galactose residues on xyloglucan side chains.</title>
        <authorList>
            <person name="Zhong R."/>
            <person name="Cui D."/>
            <person name="Ye Z.H."/>
        </authorList>
    </citation>
    <scope>FUNCTION</scope>
    <scope>CATALYTIC ACTIVITY</scope>
    <scope>BIOPHYSICOCHEMICAL PROPERTIES</scope>
</reference>
<reference key="8">
    <citation type="journal article" date="2010" name="Plant Signal. Behav.">
        <title>Involvement of TBL/DUF231 proteins into cell wall biology.</title>
        <authorList>
            <person name="Bischoff V."/>
            <person name="Selbig J."/>
            <person name="Scheible W.R."/>
        </authorList>
    </citation>
    <scope>3D-STRUCTURE MODELING</scope>
</reference>
<dbReference type="EC" id="2.3.1.-" evidence="5"/>
<dbReference type="EMBL" id="AB028616">
    <property type="protein sequence ID" value="BAB01135.1"/>
    <property type="molecule type" value="Genomic_DNA"/>
</dbReference>
<dbReference type="EMBL" id="CP002686">
    <property type="protein sequence ID" value="AEE77409.1"/>
    <property type="molecule type" value="Genomic_DNA"/>
</dbReference>
<dbReference type="EMBL" id="AY070041">
    <property type="protein sequence ID" value="AAL49798.1"/>
    <property type="molecule type" value="mRNA"/>
</dbReference>
<dbReference type="EMBL" id="AY117223">
    <property type="protein sequence ID" value="AAM51298.1"/>
    <property type="molecule type" value="mRNA"/>
</dbReference>
<dbReference type="RefSeq" id="NP_189454.1">
    <property type="nucleotide sequence ID" value="NM_113733.6"/>
</dbReference>
<dbReference type="SMR" id="Q9LRS2"/>
<dbReference type="FunCoup" id="Q9LRS2">
    <property type="interactions" value="4"/>
</dbReference>
<dbReference type="STRING" id="3702.Q9LRS2"/>
<dbReference type="GlyCosmos" id="Q9LRS2">
    <property type="glycosylation" value="4 sites, No reported glycans"/>
</dbReference>
<dbReference type="GlyGen" id="Q9LRS2">
    <property type="glycosylation" value="4 sites"/>
</dbReference>
<dbReference type="PaxDb" id="3702-AT3G28150.1"/>
<dbReference type="ProteomicsDB" id="234159"/>
<dbReference type="EnsemblPlants" id="AT3G28150.1">
    <property type="protein sequence ID" value="AT3G28150.1"/>
    <property type="gene ID" value="AT3G28150"/>
</dbReference>
<dbReference type="GeneID" id="822439"/>
<dbReference type="Gramene" id="AT3G28150.1">
    <property type="protein sequence ID" value="AT3G28150.1"/>
    <property type="gene ID" value="AT3G28150"/>
</dbReference>
<dbReference type="KEGG" id="ath:AT3G28150"/>
<dbReference type="Araport" id="AT3G28150"/>
<dbReference type="TAIR" id="AT3G28150">
    <property type="gene designation" value="TBL22"/>
</dbReference>
<dbReference type="eggNOG" id="ENOG502QPJ5">
    <property type="taxonomic scope" value="Eukaryota"/>
</dbReference>
<dbReference type="HOGENOM" id="CLU_020953_6_1_1"/>
<dbReference type="InParanoid" id="Q9LRS2"/>
<dbReference type="OMA" id="PCGRKTL"/>
<dbReference type="PhylomeDB" id="Q9LRS2"/>
<dbReference type="PRO" id="PR:Q9LRS2"/>
<dbReference type="Proteomes" id="UP000006548">
    <property type="component" value="Chromosome 3"/>
</dbReference>
<dbReference type="ExpressionAtlas" id="Q9LRS2">
    <property type="expression patterns" value="baseline and differential"/>
</dbReference>
<dbReference type="GO" id="GO:0005794">
    <property type="term" value="C:Golgi apparatus"/>
    <property type="evidence" value="ECO:0007005"/>
    <property type="project" value="TAIR"/>
</dbReference>
<dbReference type="GO" id="GO:0016020">
    <property type="term" value="C:membrane"/>
    <property type="evidence" value="ECO:0007669"/>
    <property type="project" value="UniProtKB-SubCell"/>
</dbReference>
<dbReference type="GO" id="GO:0016413">
    <property type="term" value="F:O-acetyltransferase activity"/>
    <property type="evidence" value="ECO:0007669"/>
    <property type="project" value="InterPro"/>
</dbReference>
<dbReference type="GO" id="GO:0010411">
    <property type="term" value="P:xyloglucan metabolic process"/>
    <property type="evidence" value="ECO:0000315"/>
    <property type="project" value="TAIR"/>
</dbReference>
<dbReference type="InterPro" id="IPR029962">
    <property type="entry name" value="TBL"/>
</dbReference>
<dbReference type="InterPro" id="IPR026057">
    <property type="entry name" value="TBL_C"/>
</dbReference>
<dbReference type="InterPro" id="IPR025846">
    <property type="entry name" value="TBL_N"/>
</dbReference>
<dbReference type="PANTHER" id="PTHR32285">
    <property type="entry name" value="PROTEIN TRICHOME BIREFRINGENCE-LIKE 9-RELATED"/>
    <property type="match status" value="1"/>
</dbReference>
<dbReference type="PANTHER" id="PTHR32285:SF28">
    <property type="entry name" value="XYLOGLUCAN O-ACETYLTRANSFERASE 2"/>
    <property type="match status" value="1"/>
</dbReference>
<dbReference type="Pfam" id="PF13839">
    <property type="entry name" value="PC-Esterase"/>
    <property type="match status" value="1"/>
</dbReference>
<dbReference type="Pfam" id="PF14416">
    <property type="entry name" value="PMR5N"/>
    <property type="match status" value="1"/>
</dbReference>